<feature type="chain" id="PRO_0000150153" description="Phosphoserine aminotransferase">
    <location>
        <begin position="1"/>
        <end position="359"/>
    </location>
</feature>
<feature type="binding site" evidence="1">
    <location>
        <position position="42"/>
    </location>
    <ligand>
        <name>L-glutamate</name>
        <dbReference type="ChEBI" id="CHEBI:29985"/>
    </ligand>
</feature>
<feature type="binding site" evidence="1">
    <location>
        <begin position="76"/>
        <end position="77"/>
    </location>
    <ligand>
        <name>pyridoxal 5'-phosphate</name>
        <dbReference type="ChEBI" id="CHEBI:597326"/>
    </ligand>
</feature>
<feature type="binding site" evidence="1">
    <location>
        <position position="102"/>
    </location>
    <ligand>
        <name>pyridoxal 5'-phosphate</name>
        <dbReference type="ChEBI" id="CHEBI:597326"/>
    </ligand>
</feature>
<feature type="binding site" evidence="1">
    <location>
        <position position="151"/>
    </location>
    <ligand>
        <name>pyridoxal 5'-phosphate</name>
        <dbReference type="ChEBI" id="CHEBI:597326"/>
    </ligand>
</feature>
<feature type="binding site" evidence="1">
    <location>
        <position position="170"/>
    </location>
    <ligand>
        <name>pyridoxal 5'-phosphate</name>
        <dbReference type="ChEBI" id="CHEBI:597326"/>
    </ligand>
</feature>
<feature type="binding site" evidence="1">
    <location>
        <position position="193"/>
    </location>
    <ligand>
        <name>pyridoxal 5'-phosphate</name>
        <dbReference type="ChEBI" id="CHEBI:597326"/>
    </ligand>
</feature>
<feature type="binding site" evidence="1">
    <location>
        <begin position="235"/>
        <end position="236"/>
    </location>
    <ligand>
        <name>pyridoxal 5'-phosphate</name>
        <dbReference type="ChEBI" id="CHEBI:597326"/>
    </ligand>
</feature>
<feature type="modified residue" description="N6-(pyridoxal phosphate)lysine" evidence="1">
    <location>
        <position position="194"/>
    </location>
</feature>
<feature type="sequence conflict" description="In Ref. 3; AA sequence." evidence="2" ref="3">
    <original>T</original>
    <variation>W</variation>
    <location>
        <position position="5"/>
    </location>
</feature>
<accession>P80862</accession>
<accession>O07514</accession>
<dbReference type="EC" id="2.6.1.52"/>
<dbReference type="EMBL" id="Y14077">
    <property type="protein sequence ID" value="CAA74411.1"/>
    <property type="molecule type" value="Genomic_DNA"/>
</dbReference>
<dbReference type="EMBL" id="AL009126">
    <property type="protein sequence ID" value="CAB12842.1"/>
    <property type="molecule type" value="Genomic_DNA"/>
</dbReference>
<dbReference type="PIR" id="D69705">
    <property type="entry name" value="D69705"/>
</dbReference>
<dbReference type="RefSeq" id="NP_388883.1">
    <property type="nucleotide sequence ID" value="NC_000964.3"/>
</dbReference>
<dbReference type="RefSeq" id="WP_003233234.1">
    <property type="nucleotide sequence ID" value="NZ_OZ025638.1"/>
</dbReference>
<dbReference type="SMR" id="P80862"/>
<dbReference type="FunCoup" id="P80862">
    <property type="interactions" value="649"/>
</dbReference>
<dbReference type="STRING" id="224308.BSU10020"/>
<dbReference type="jPOST" id="P80862"/>
<dbReference type="PaxDb" id="224308-BSU10020"/>
<dbReference type="EnsemblBacteria" id="CAB12842">
    <property type="protein sequence ID" value="CAB12842"/>
    <property type="gene ID" value="BSU_10020"/>
</dbReference>
<dbReference type="GeneID" id="936304"/>
<dbReference type="KEGG" id="bsu:BSU10020"/>
<dbReference type="PATRIC" id="fig|224308.179.peg.1078"/>
<dbReference type="eggNOG" id="COG1932">
    <property type="taxonomic scope" value="Bacteria"/>
</dbReference>
<dbReference type="InParanoid" id="P80862"/>
<dbReference type="OrthoDB" id="9809412at2"/>
<dbReference type="PhylomeDB" id="P80862"/>
<dbReference type="BioCyc" id="BSUB:BSU10020-MONOMER"/>
<dbReference type="UniPathway" id="UPA00135">
    <property type="reaction ID" value="UER00197"/>
</dbReference>
<dbReference type="UniPathway" id="UPA00244">
    <property type="reaction ID" value="UER00311"/>
</dbReference>
<dbReference type="Proteomes" id="UP000001570">
    <property type="component" value="Chromosome"/>
</dbReference>
<dbReference type="GO" id="GO:0005737">
    <property type="term" value="C:cytoplasm"/>
    <property type="evidence" value="ECO:0000318"/>
    <property type="project" value="GO_Central"/>
</dbReference>
<dbReference type="GO" id="GO:0004648">
    <property type="term" value="F:O-phospho-L-serine:2-oxoglutarate aminotransferase activity"/>
    <property type="evidence" value="ECO:0000318"/>
    <property type="project" value="GO_Central"/>
</dbReference>
<dbReference type="GO" id="GO:0030170">
    <property type="term" value="F:pyridoxal phosphate binding"/>
    <property type="evidence" value="ECO:0000318"/>
    <property type="project" value="GO_Central"/>
</dbReference>
<dbReference type="GO" id="GO:0006564">
    <property type="term" value="P:L-serine biosynthetic process"/>
    <property type="evidence" value="ECO:0000318"/>
    <property type="project" value="GO_Central"/>
</dbReference>
<dbReference type="CDD" id="cd00611">
    <property type="entry name" value="PSAT_like"/>
    <property type="match status" value="1"/>
</dbReference>
<dbReference type="FunFam" id="3.40.640.10:FF:000010">
    <property type="entry name" value="Phosphoserine aminotransferase"/>
    <property type="match status" value="1"/>
</dbReference>
<dbReference type="FunFam" id="3.90.1150.10:FF:000006">
    <property type="entry name" value="Phosphoserine aminotransferase"/>
    <property type="match status" value="1"/>
</dbReference>
<dbReference type="Gene3D" id="3.90.1150.10">
    <property type="entry name" value="Aspartate Aminotransferase, domain 1"/>
    <property type="match status" value="1"/>
</dbReference>
<dbReference type="Gene3D" id="3.40.640.10">
    <property type="entry name" value="Type I PLP-dependent aspartate aminotransferase-like (Major domain)"/>
    <property type="match status" value="1"/>
</dbReference>
<dbReference type="HAMAP" id="MF_00160">
    <property type="entry name" value="SerC_aminotrans_5"/>
    <property type="match status" value="1"/>
</dbReference>
<dbReference type="InterPro" id="IPR000192">
    <property type="entry name" value="Aminotrans_V_dom"/>
</dbReference>
<dbReference type="InterPro" id="IPR020578">
    <property type="entry name" value="Aminotrans_V_PyrdxlP_BS"/>
</dbReference>
<dbReference type="InterPro" id="IPR022278">
    <property type="entry name" value="Pser_aminoTfrase"/>
</dbReference>
<dbReference type="InterPro" id="IPR015424">
    <property type="entry name" value="PyrdxlP-dep_Trfase"/>
</dbReference>
<dbReference type="InterPro" id="IPR015421">
    <property type="entry name" value="PyrdxlP-dep_Trfase_major"/>
</dbReference>
<dbReference type="InterPro" id="IPR015422">
    <property type="entry name" value="PyrdxlP-dep_Trfase_small"/>
</dbReference>
<dbReference type="NCBIfam" id="NF003764">
    <property type="entry name" value="PRK05355.1"/>
    <property type="match status" value="1"/>
</dbReference>
<dbReference type="NCBIfam" id="TIGR01364">
    <property type="entry name" value="serC_1"/>
    <property type="match status" value="1"/>
</dbReference>
<dbReference type="PANTHER" id="PTHR43247">
    <property type="entry name" value="PHOSPHOSERINE AMINOTRANSFERASE"/>
    <property type="match status" value="1"/>
</dbReference>
<dbReference type="PANTHER" id="PTHR43247:SF1">
    <property type="entry name" value="PHOSPHOSERINE AMINOTRANSFERASE"/>
    <property type="match status" value="1"/>
</dbReference>
<dbReference type="Pfam" id="PF00266">
    <property type="entry name" value="Aminotran_5"/>
    <property type="match status" value="1"/>
</dbReference>
<dbReference type="PIRSF" id="PIRSF000525">
    <property type="entry name" value="SerC"/>
    <property type="match status" value="1"/>
</dbReference>
<dbReference type="SUPFAM" id="SSF53383">
    <property type="entry name" value="PLP-dependent transferases"/>
    <property type="match status" value="1"/>
</dbReference>
<dbReference type="PROSITE" id="PS00595">
    <property type="entry name" value="AA_TRANSFER_CLASS_5"/>
    <property type="match status" value="1"/>
</dbReference>
<comment type="function">
    <text evidence="1">Catalyzes the reversible conversion of 3-phosphohydroxypyruvate to phosphoserine and of 3-hydroxy-2-oxo-4-phosphonooxybutanoate to phosphohydroxythreonine.</text>
</comment>
<comment type="catalytic activity">
    <reaction>
        <text>O-phospho-L-serine + 2-oxoglutarate = 3-phosphooxypyruvate + L-glutamate</text>
        <dbReference type="Rhea" id="RHEA:14329"/>
        <dbReference type="ChEBI" id="CHEBI:16810"/>
        <dbReference type="ChEBI" id="CHEBI:18110"/>
        <dbReference type="ChEBI" id="CHEBI:29985"/>
        <dbReference type="ChEBI" id="CHEBI:57524"/>
        <dbReference type="EC" id="2.6.1.52"/>
    </reaction>
</comment>
<comment type="catalytic activity">
    <reaction>
        <text>4-(phosphooxy)-L-threonine + 2-oxoglutarate = (R)-3-hydroxy-2-oxo-4-phosphooxybutanoate + L-glutamate</text>
        <dbReference type="Rhea" id="RHEA:16573"/>
        <dbReference type="ChEBI" id="CHEBI:16810"/>
        <dbReference type="ChEBI" id="CHEBI:29985"/>
        <dbReference type="ChEBI" id="CHEBI:58452"/>
        <dbReference type="ChEBI" id="CHEBI:58538"/>
        <dbReference type="EC" id="2.6.1.52"/>
    </reaction>
</comment>
<comment type="cofactor">
    <cofactor evidence="1">
        <name>pyridoxal 5'-phosphate</name>
        <dbReference type="ChEBI" id="CHEBI:597326"/>
    </cofactor>
</comment>
<comment type="pathway">
    <text>Amino-acid biosynthesis; L-serine biosynthesis; L-serine from 3-phospho-D-glycerate: step 2/3.</text>
</comment>
<comment type="pathway">
    <text>Cofactor biosynthesis; pyridoxine 5'-phosphate biosynthesis; pyridoxine 5'-phosphate from D-erythrose 4-phosphate: step 3/5.</text>
</comment>
<comment type="subunit">
    <text evidence="1">Homodimer.</text>
</comment>
<comment type="subcellular location">
    <subcellularLocation>
        <location evidence="1">Cytoplasm</location>
    </subcellularLocation>
</comment>
<comment type="similarity">
    <text evidence="2">Belongs to the class-V pyridoxal-phosphate-dependent aminotransferase family. SerC subfamily.</text>
</comment>
<comment type="caution">
    <text evidence="2">According to PubMed:16233211, SerC is not involved in pyridoxine biosynthesis in B.subtilis. In this organism, pyridoxal phosphate biosynthesis is achieved via an alternative pathway involving PdxS and PdxT.</text>
</comment>
<reference key="1">
    <citation type="journal article" date="1998" name="Microbiology">
        <title>The 172 kb prkA-addAB region from 83 degrees to 97 degrees of the Bacillus subtilis chromosome contains several dysfunctional genes, the glyB marker, many genes encoding transporter proteins, and the ubiquitous hit gene.</title>
        <authorList>
            <person name="Noback M.A."/>
            <person name="Holsappel S."/>
            <person name="Kiewiet R."/>
            <person name="Terpstra P."/>
            <person name="Wambutt R."/>
            <person name="Wedler H."/>
            <person name="Venema G."/>
            <person name="Bron S."/>
        </authorList>
    </citation>
    <scope>NUCLEOTIDE SEQUENCE [GENOMIC DNA]</scope>
    <source>
        <strain>168</strain>
    </source>
</reference>
<reference key="2">
    <citation type="journal article" date="1997" name="Nature">
        <title>The complete genome sequence of the Gram-positive bacterium Bacillus subtilis.</title>
        <authorList>
            <person name="Kunst F."/>
            <person name="Ogasawara N."/>
            <person name="Moszer I."/>
            <person name="Albertini A.M."/>
            <person name="Alloni G."/>
            <person name="Azevedo V."/>
            <person name="Bertero M.G."/>
            <person name="Bessieres P."/>
            <person name="Bolotin A."/>
            <person name="Borchert S."/>
            <person name="Borriss R."/>
            <person name="Boursier L."/>
            <person name="Brans A."/>
            <person name="Braun M."/>
            <person name="Brignell S.C."/>
            <person name="Bron S."/>
            <person name="Brouillet S."/>
            <person name="Bruschi C.V."/>
            <person name="Caldwell B."/>
            <person name="Capuano V."/>
            <person name="Carter N.M."/>
            <person name="Choi S.-K."/>
            <person name="Codani J.-J."/>
            <person name="Connerton I.F."/>
            <person name="Cummings N.J."/>
            <person name="Daniel R.A."/>
            <person name="Denizot F."/>
            <person name="Devine K.M."/>
            <person name="Duesterhoeft A."/>
            <person name="Ehrlich S.D."/>
            <person name="Emmerson P.T."/>
            <person name="Entian K.-D."/>
            <person name="Errington J."/>
            <person name="Fabret C."/>
            <person name="Ferrari E."/>
            <person name="Foulger D."/>
            <person name="Fritz C."/>
            <person name="Fujita M."/>
            <person name="Fujita Y."/>
            <person name="Fuma S."/>
            <person name="Galizzi A."/>
            <person name="Galleron N."/>
            <person name="Ghim S.-Y."/>
            <person name="Glaser P."/>
            <person name="Goffeau A."/>
            <person name="Golightly E.J."/>
            <person name="Grandi G."/>
            <person name="Guiseppi G."/>
            <person name="Guy B.J."/>
            <person name="Haga K."/>
            <person name="Haiech J."/>
            <person name="Harwood C.R."/>
            <person name="Henaut A."/>
            <person name="Hilbert H."/>
            <person name="Holsappel S."/>
            <person name="Hosono S."/>
            <person name="Hullo M.-F."/>
            <person name="Itaya M."/>
            <person name="Jones L.-M."/>
            <person name="Joris B."/>
            <person name="Karamata D."/>
            <person name="Kasahara Y."/>
            <person name="Klaerr-Blanchard M."/>
            <person name="Klein C."/>
            <person name="Kobayashi Y."/>
            <person name="Koetter P."/>
            <person name="Koningstein G."/>
            <person name="Krogh S."/>
            <person name="Kumano M."/>
            <person name="Kurita K."/>
            <person name="Lapidus A."/>
            <person name="Lardinois S."/>
            <person name="Lauber J."/>
            <person name="Lazarevic V."/>
            <person name="Lee S.-M."/>
            <person name="Levine A."/>
            <person name="Liu H."/>
            <person name="Masuda S."/>
            <person name="Mauel C."/>
            <person name="Medigue C."/>
            <person name="Medina N."/>
            <person name="Mellado R.P."/>
            <person name="Mizuno M."/>
            <person name="Moestl D."/>
            <person name="Nakai S."/>
            <person name="Noback M."/>
            <person name="Noone D."/>
            <person name="O'Reilly M."/>
            <person name="Ogawa K."/>
            <person name="Ogiwara A."/>
            <person name="Oudega B."/>
            <person name="Park S.-H."/>
            <person name="Parro V."/>
            <person name="Pohl T.M."/>
            <person name="Portetelle D."/>
            <person name="Porwollik S."/>
            <person name="Prescott A.M."/>
            <person name="Presecan E."/>
            <person name="Pujic P."/>
            <person name="Purnelle B."/>
            <person name="Rapoport G."/>
            <person name="Rey M."/>
            <person name="Reynolds S."/>
            <person name="Rieger M."/>
            <person name="Rivolta C."/>
            <person name="Rocha E."/>
            <person name="Roche B."/>
            <person name="Rose M."/>
            <person name="Sadaie Y."/>
            <person name="Sato T."/>
            <person name="Scanlan E."/>
            <person name="Schleich S."/>
            <person name="Schroeter R."/>
            <person name="Scoffone F."/>
            <person name="Sekiguchi J."/>
            <person name="Sekowska A."/>
            <person name="Seror S.J."/>
            <person name="Serror P."/>
            <person name="Shin B.-S."/>
            <person name="Soldo B."/>
            <person name="Sorokin A."/>
            <person name="Tacconi E."/>
            <person name="Takagi T."/>
            <person name="Takahashi H."/>
            <person name="Takemaru K."/>
            <person name="Takeuchi M."/>
            <person name="Tamakoshi A."/>
            <person name="Tanaka T."/>
            <person name="Terpstra P."/>
            <person name="Tognoni A."/>
            <person name="Tosato V."/>
            <person name="Uchiyama S."/>
            <person name="Vandenbol M."/>
            <person name="Vannier F."/>
            <person name="Vassarotti A."/>
            <person name="Viari A."/>
            <person name="Wambutt R."/>
            <person name="Wedler E."/>
            <person name="Wedler H."/>
            <person name="Weitzenegger T."/>
            <person name="Winters P."/>
            <person name="Wipat A."/>
            <person name="Yamamoto H."/>
            <person name="Yamane K."/>
            <person name="Yasumoto K."/>
            <person name="Yata K."/>
            <person name="Yoshida K."/>
            <person name="Yoshikawa H.-F."/>
            <person name="Zumstein E."/>
            <person name="Yoshikawa H."/>
            <person name="Danchin A."/>
        </authorList>
    </citation>
    <scope>NUCLEOTIDE SEQUENCE [LARGE SCALE GENOMIC DNA]</scope>
    <source>
        <strain>168</strain>
    </source>
</reference>
<reference key="3">
    <citation type="journal article" date="1997" name="Electrophoresis">
        <title>First steps from a two-dimensional protein index towards a response-regulation map for Bacillus subtilis.</title>
        <authorList>
            <person name="Antelmann H."/>
            <person name="Bernhardt J."/>
            <person name="Schmid R."/>
            <person name="Mach H."/>
            <person name="Voelker U."/>
            <person name="Hecker M."/>
        </authorList>
    </citation>
    <scope>PROTEIN SEQUENCE OF 1-11</scope>
    <source>
        <strain>168 / IS58</strain>
    </source>
</reference>
<reference key="4">
    <citation type="journal article" date="2002" name="J. Biosci. Bioeng.">
        <title>serC is involved in vitamin B6 biosynthesis in Escherichia coli but not in Bacillus subtilis.</title>
        <authorList>
            <person name="Sakai A."/>
            <person name="Kita M."/>
            <person name="Katsuragi T."/>
            <person name="Tani Y."/>
        </authorList>
    </citation>
    <scope>NON-INVOLVEMENT IN PYRIDOXINE BIOSYNTHESIS</scope>
    <source>
        <strain>CRK6000</strain>
    </source>
</reference>
<name>SERC_BACSU</name>
<gene>
    <name type="primary">serC</name>
    <name type="synonym">yhaF</name>
    <name type="ordered locus">BSU10020</name>
</gene>
<keyword id="KW-0028">Amino-acid biosynthesis</keyword>
<keyword id="KW-0032">Aminotransferase</keyword>
<keyword id="KW-0963">Cytoplasm</keyword>
<keyword id="KW-0903">Direct protein sequencing</keyword>
<keyword id="KW-0663">Pyridoxal phosphate</keyword>
<keyword id="KW-1185">Reference proteome</keyword>
<keyword id="KW-0718">Serine biosynthesis</keyword>
<keyword id="KW-0808">Transferase</keyword>
<sequence length="359" mass="40136">MERTTNFNAGPAALPLEVLQKAQKEFIDFNESGMSVMELSHRSKEYEAVHQKAKSLLIELMGIPEDYDILFLQGGASLQFSMLPMNFLTPEKTAHFVMTGAWSEKALAETKLFGNTSITATSETDNYSYIPEVDLTDVKDGAYLHITSNNTIFGTQWQEFPNSPIPLVADMSSDILSRKIDVSKFDVIYGGAQKNLGPSGVTVVIMKKSWLQNENANVPKILKYSTHVKADSLYNTPPTFAIYMLSLVLEWLKENGGVEAVEQRNEQKAQVLYSCIDESNGFYKGHARKDSRSRMNVTFTLRDDELTKTFVQKAKDAKMIGLGGHRSVGGCRASIYNAVSLEDCEKLAAFMKKFQQENE</sequence>
<evidence type="ECO:0000250" key="1"/>
<evidence type="ECO:0000305" key="2"/>
<organism>
    <name type="scientific">Bacillus subtilis (strain 168)</name>
    <dbReference type="NCBI Taxonomy" id="224308"/>
    <lineage>
        <taxon>Bacteria</taxon>
        <taxon>Bacillati</taxon>
        <taxon>Bacillota</taxon>
        <taxon>Bacilli</taxon>
        <taxon>Bacillales</taxon>
        <taxon>Bacillaceae</taxon>
        <taxon>Bacillus</taxon>
    </lineage>
</organism>
<proteinExistence type="evidence at protein level"/>
<protein>
    <recommendedName>
        <fullName>Phosphoserine aminotransferase</fullName>
        <ecNumber>2.6.1.52</ecNumber>
    </recommendedName>
    <alternativeName>
        <fullName>Phosphohydroxythreonine aminotransferase</fullName>
        <shortName>PSAT</shortName>
    </alternativeName>
    <alternativeName>
        <fullName>Vegetative protein 234</fullName>
        <shortName>VEG234</shortName>
    </alternativeName>
</protein>